<reference key="1">
    <citation type="journal article" date="1995" name="J. Biol. Chem.">
        <title>A novel GTPase-activating protein for R-Ras.</title>
        <authorList>
            <person name="Yamamoto T."/>
            <person name="Matsui T."/>
            <person name="Nakafuku M."/>
            <person name="Iwamatsu A."/>
            <person name="Kaibuchi K."/>
        </authorList>
    </citation>
    <scope>NUCLEOTIDE SEQUENCE [MRNA]</scope>
    <source>
        <tissue>Brain</tissue>
    </source>
</reference>
<keyword id="KW-0007">Acetylation</keyword>
<keyword id="KW-0343">GTPase activation</keyword>
<keyword id="KW-0479">Metal-binding</keyword>
<keyword id="KW-0597">Phosphoprotein</keyword>
<keyword id="KW-1185">Reference proteome</keyword>
<keyword id="KW-0677">Repeat</keyword>
<keyword id="KW-0862">Zinc</keyword>
<keyword id="KW-0863">Zinc-finger</keyword>
<feature type="initiator methionine" description="Removed" evidence="1">
    <location>
        <position position="1"/>
    </location>
</feature>
<feature type="chain" id="PRO_0000056641" description="Ras GTPase-activating protein 3">
    <location>
        <begin position="2"/>
        <end position="834"/>
    </location>
</feature>
<feature type="domain" description="C2 1" evidence="3">
    <location>
        <begin position="1"/>
        <end position="112"/>
    </location>
</feature>
<feature type="domain" description="C2 2" evidence="3">
    <location>
        <begin position="123"/>
        <end position="263"/>
    </location>
</feature>
<feature type="domain" description="Ras-GAP" evidence="5">
    <location>
        <begin position="346"/>
        <end position="561"/>
    </location>
</feature>
<feature type="domain" description="PH" evidence="4">
    <location>
        <begin position="576"/>
        <end position="677"/>
    </location>
</feature>
<feature type="zinc finger region" description="Btk-type" evidence="6">
    <location>
        <begin position="679"/>
        <end position="715"/>
    </location>
</feature>
<feature type="region of interest" description="Disordered" evidence="7">
    <location>
        <begin position="806"/>
        <end position="834"/>
    </location>
</feature>
<feature type="compositionally biased region" description="Polar residues" evidence="7">
    <location>
        <begin position="818"/>
        <end position="834"/>
    </location>
</feature>
<feature type="binding site" evidence="6">
    <location>
        <position position="687"/>
    </location>
    <ligand>
        <name>Zn(2+)</name>
        <dbReference type="ChEBI" id="CHEBI:29105"/>
    </ligand>
</feature>
<feature type="binding site" evidence="6">
    <location>
        <position position="698"/>
    </location>
    <ligand>
        <name>Zn(2+)</name>
        <dbReference type="ChEBI" id="CHEBI:29105"/>
    </ligand>
</feature>
<feature type="binding site" evidence="6">
    <location>
        <position position="699"/>
    </location>
    <ligand>
        <name>Zn(2+)</name>
        <dbReference type="ChEBI" id="CHEBI:29105"/>
    </ligand>
</feature>
<feature type="binding site" evidence="6">
    <location>
        <position position="709"/>
    </location>
    <ligand>
        <name>Zn(2+)</name>
        <dbReference type="ChEBI" id="CHEBI:29105"/>
    </ligand>
</feature>
<feature type="site" description="Arginine finger; crucial for GTP hydrolysis by stabilizing the transition state" evidence="5">
    <location>
        <position position="371"/>
    </location>
</feature>
<feature type="modified residue" description="N-acetylalanine" evidence="1">
    <location>
        <position position="2"/>
    </location>
</feature>
<feature type="modified residue" description="Phosphotyrosine" evidence="2">
    <location>
        <position position="66"/>
    </location>
</feature>
<feature type="modified residue" description="Phosphoserine" evidence="2">
    <location>
        <position position="77"/>
    </location>
</feature>
<feature type="modified residue" description="Phosphothreonine" evidence="1">
    <location>
        <position position="110"/>
    </location>
</feature>
<feature type="modified residue" description="Phosphoserine" evidence="1">
    <location>
        <position position="809"/>
    </location>
</feature>
<feature type="modified residue" description="Phosphoserine" evidence="2">
    <location>
        <position position="833"/>
    </location>
</feature>
<name>RASA3_BOVIN</name>
<comment type="function">
    <text>Inhibitory regulator of the Ras-cyclic AMP pathway. May bind inositol tetrakisphosphate (IP4).</text>
</comment>
<dbReference type="EMBL" id="U30857">
    <property type="protein sequence ID" value="AAC48500.1"/>
    <property type="molecule type" value="mRNA"/>
</dbReference>
<dbReference type="SMR" id="Q28013"/>
<dbReference type="FunCoup" id="Q28013">
    <property type="interactions" value="1395"/>
</dbReference>
<dbReference type="STRING" id="9913.ENSBTAP00000026598"/>
<dbReference type="PaxDb" id="9913-ENSBTAP00000026598"/>
<dbReference type="eggNOG" id="KOG2059">
    <property type="taxonomic scope" value="Eukaryota"/>
</dbReference>
<dbReference type="InParanoid" id="Q28013"/>
<dbReference type="OrthoDB" id="1562946at2759"/>
<dbReference type="Proteomes" id="UP000009136">
    <property type="component" value="Unplaced"/>
</dbReference>
<dbReference type="GO" id="GO:0005096">
    <property type="term" value="F:GTPase activator activity"/>
    <property type="evidence" value="ECO:0007669"/>
    <property type="project" value="UniProtKB-KW"/>
</dbReference>
<dbReference type="GO" id="GO:0008270">
    <property type="term" value="F:zinc ion binding"/>
    <property type="evidence" value="ECO:0007669"/>
    <property type="project" value="UniProtKB-KW"/>
</dbReference>
<dbReference type="GO" id="GO:0035556">
    <property type="term" value="P:intracellular signal transduction"/>
    <property type="evidence" value="ECO:0007669"/>
    <property type="project" value="InterPro"/>
</dbReference>
<dbReference type="GO" id="GO:0046580">
    <property type="term" value="P:negative regulation of Ras protein signal transduction"/>
    <property type="evidence" value="ECO:0007669"/>
    <property type="project" value="InterPro"/>
</dbReference>
<dbReference type="CDD" id="cd08401">
    <property type="entry name" value="C2A_RasA2_RasA3"/>
    <property type="match status" value="1"/>
</dbReference>
<dbReference type="CDD" id="cd04010">
    <property type="entry name" value="C2B_RasA3"/>
    <property type="match status" value="1"/>
</dbReference>
<dbReference type="CDD" id="cd13371">
    <property type="entry name" value="PH_GAP1_mammal-like"/>
    <property type="match status" value="1"/>
</dbReference>
<dbReference type="CDD" id="cd05134">
    <property type="entry name" value="RasGAP_RASA3"/>
    <property type="match status" value="1"/>
</dbReference>
<dbReference type="FunFam" id="1.10.506.10:FF:000011">
    <property type="entry name" value="Ras GTPase-activating protein 2 isoform 3"/>
    <property type="match status" value="1"/>
</dbReference>
<dbReference type="FunFam" id="2.30.29.30:FF:000144">
    <property type="entry name" value="Ras GTPase-activating protein 2 isoform 3"/>
    <property type="match status" value="1"/>
</dbReference>
<dbReference type="FunFam" id="2.60.40.150:FF:000086">
    <property type="entry name" value="Ras GTPase-activating protein 2 isoform 3"/>
    <property type="match status" value="1"/>
</dbReference>
<dbReference type="FunFam" id="2.60.40.150:FF:000144">
    <property type="entry name" value="RAS p21 protein activator 3"/>
    <property type="match status" value="1"/>
</dbReference>
<dbReference type="Gene3D" id="2.60.40.150">
    <property type="entry name" value="C2 domain"/>
    <property type="match status" value="2"/>
</dbReference>
<dbReference type="Gene3D" id="1.10.506.10">
    <property type="entry name" value="GTPase Activation - p120gap, domain 1"/>
    <property type="match status" value="1"/>
</dbReference>
<dbReference type="Gene3D" id="2.30.29.30">
    <property type="entry name" value="Pleckstrin-homology domain (PH domain)/Phosphotyrosine-binding domain (PTB)"/>
    <property type="match status" value="1"/>
</dbReference>
<dbReference type="InterPro" id="IPR000008">
    <property type="entry name" value="C2_dom"/>
</dbReference>
<dbReference type="InterPro" id="IPR035892">
    <property type="entry name" value="C2_domain_sf"/>
</dbReference>
<dbReference type="InterPro" id="IPR011993">
    <property type="entry name" value="PH-like_dom_sf"/>
</dbReference>
<dbReference type="InterPro" id="IPR001849">
    <property type="entry name" value="PH_domain"/>
</dbReference>
<dbReference type="InterPro" id="IPR039360">
    <property type="entry name" value="Ras_GTPase"/>
</dbReference>
<dbReference type="InterPro" id="IPR037774">
    <property type="entry name" value="RASA3_PH"/>
</dbReference>
<dbReference type="InterPro" id="IPR023152">
    <property type="entry name" value="RasGAP_CS"/>
</dbReference>
<dbReference type="InterPro" id="IPR001936">
    <property type="entry name" value="RasGAP_dom"/>
</dbReference>
<dbReference type="InterPro" id="IPR008936">
    <property type="entry name" value="Rho_GTPase_activation_prot"/>
</dbReference>
<dbReference type="InterPro" id="IPR001562">
    <property type="entry name" value="Znf_Btk_motif"/>
</dbReference>
<dbReference type="PANTHER" id="PTHR10194:SF53">
    <property type="entry name" value="RAS GTPASE-ACTIVATING PROTEIN 3"/>
    <property type="match status" value="1"/>
</dbReference>
<dbReference type="PANTHER" id="PTHR10194">
    <property type="entry name" value="RAS GTPASE-ACTIVATING PROTEINS"/>
    <property type="match status" value="1"/>
</dbReference>
<dbReference type="Pfam" id="PF00779">
    <property type="entry name" value="BTK"/>
    <property type="match status" value="1"/>
</dbReference>
<dbReference type="Pfam" id="PF00168">
    <property type="entry name" value="C2"/>
    <property type="match status" value="2"/>
</dbReference>
<dbReference type="Pfam" id="PF00169">
    <property type="entry name" value="PH"/>
    <property type="match status" value="1"/>
</dbReference>
<dbReference type="Pfam" id="PF00616">
    <property type="entry name" value="RasGAP"/>
    <property type="match status" value="2"/>
</dbReference>
<dbReference type="PRINTS" id="PR00402">
    <property type="entry name" value="TECBTKDOMAIN"/>
</dbReference>
<dbReference type="SMART" id="SM00107">
    <property type="entry name" value="BTK"/>
    <property type="match status" value="1"/>
</dbReference>
<dbReference type="SMART" id="SM00239">
    <property type="entry name" value="C2"/>
    <property type="match status" value="2"/>
</dbReference>
<dbReference type="SMART" id="SM00233">
    <property type="entry name" value="PH"/>
    <property type="match status" value="1"/>
</dbReference>
<dbReference type="SMART" id="SM00323">
    <property type="entry name" value="RasGAP"/>
    <property type="match status" value="1"/>
</dbReference>
<dbReference type="SUPFAM" id="SSF49562">
    <property type="entry name" value="C2 domain (Calcium/lipid-binding domain, CaLB)"/>
    <property type="match status" value="2"/>
</dbReference>
<dbReference type="SUPFAM" id="SSF48350">
    <property type="entry name" value="GTPase activation domain, GAP"/>
    <property type="match status" value="1"/>
</dbReference>
<dbReference type="SUPFAM" id="SSF50729">
    <property type="entry name" value="PH domain-like"/>
    <property type="match status" value="1"/>
</dbReference>
<dbReference type="PROSITE" id="PS50004">
    <property type="entry name" value="C2"/>
    <property type="match status" value="2"/>
</dbReference>
<dbReference type="PROSITE" id="PS50003">
    <property type="entry name" value="PH_DOMAIN"/>
    <property type="match status" value="1"/>
</dbReference>
<dbReference type="PROSITE" id="PS00509">
    <property type="entry name" value="RAS_GTPASE_ACTIV_1"/>
    <property type="match status" value="1"/>
</dbReference>
<dbReference type="PROSITE" id="PS50018">
    <property type="entry name" value="RAS_GTPASE_ACTIV_2"/>
    <property type="match status" value="1"/>
</dbReference>
<dbReference type="PROSITE" id="PS51113">
    <property type="entry name" value="ZF_BTK"/>
    <property type="match status" value="1"/>
</dbReference>
<gene>
    <name type="primary">RASA3</name>
</gene>
<evidence type="ECO:0000250" key="1">
    <source>
        <dbReference type="UniProtKB" id="Q14644"/>
    </source>
</evidence>
<evidence type="ECO:0000250" key="2">
    <source>
        <dbReference type="UniProtKB" id="Q60790"/>
    </source>
</evidence>
<evidence type="ECO:0000255" key="3">
    <source>
        <dbReference type="PROSITE-ProRule" id="PRU00041"/>
    </source>
</evidence>
<evidence type="ECO:0000255" key="4">
    <source>
        <dbReference type="PROSITE-ProRule" id="PRU00145"/>
    </source>
</evidence>
<evidence type="ECO:0000255" key="5">
    <source>
        <dbReference type="PROSITE-ProRule" id="PRU00167"/>
    </source>
</evidence>
<evidence type="ECO:0000255" key="6">
    <source>
        <dbReference type="PROSITE-ProRule" id="PRU00432"/>
    </source>
</evidence>
<evidence type="ECO:0000256" key="7">
    <source>
        <dbReference type="SAM" id="MobiDB-lite"/>
    </source>
</evidence>
<accession>Q28013</accession>
<sequence>MAVEEEGLRVFQSVKIKIGEAKNLPTYPGPNKMRDCYCTVNLDQEEVFRTKVVEKSLCPFYGEDFYCEIPRSFRHLSFYIFDRDVFRRDSIIGKVAIKKEDLQKYHNRDTWFQLQHVDADSEVQGKVHLELRLSEVITDSGVVCHKLATRILECQGLPIVNGQCDPYATVTLAGPCRSEAKKTKVKKKTNNPQFDEVFYFEVTRPCSYSRKSHFDFEDEDVDKLEIRVDLWNASNLKFGDEFLGELRVPLKVLRQSSPHEAWYFLQPRDNGSKSLKPGDLGSLRLNVVYTEDHVFSSDYYSPLRDLLLKSADVEPVSASAAHILGEVCREKQEAAIPLVRLFLHYGRVVPFISAIASAEVRRTQDPNTIFRGNSLTSKCIDETMKLAGMQYLHVTLKPTIEEICQSHKSCEIDPVRLKDGESLESNMENLRQFVDRVFSVITKSGVSCPTVMCDIFFSLREAAAKRFQDDLDVRYTAVSSFIFLRFFAPAILSPNLFQLTPHHTDPQTSRTLTLVSKTIQTLGSLSKSKSASFKESYMAAFYEFFNEQKYADAVKNFLDLISSSGRRDPKSVQQPILLKEGFMIKRAQGRKRFGMKNFKKRWFRLTNHEFTYQKSKGDPPLYSIPIENILAVEPLEEESFKMKNMFQVIQPERALYIQANNCVEAKAWIDILTKVSQCNQKRLAVYHPSAYLNGHWLCCRASSDTAAGCSPCTGGLPANIQLDIDGDRETERIYSLSSSYMSKLETMQEACGSRSVYDGPEQEEYSTFIIDDPQETYKTLKQVVAGVGALEQEHAQYKRDKFRRTKYGSQEHPIGDKSFQSYIRQQSETPAHSM</sequence>
<protein>
    <recommendedName>
        <fullName>Ras GTPase-activating protein 3</fullName>
    </recommendedName>
    <alternativeName>
        <fullName>GAP1(IP4BP)</fullName>
    </alternativeName>
    <alternativeName>
        <fullName>Ins P4-binding protein</fullName>
    </alternativeName>
</protein>
<organism>
    <name type="scientific">Bos taurus</name>
    <name type="common">Bovine</name>
    <dbReference type="NCBI Taxonomy" id="9913"/>
    <lineage>
        <taxon>Eukaryota</taxon>
        <taxon>Metazoa</taxon>
        <taxon>Chordata</taxon>
        <taxon>Craniata</taxon>
        <taxon>Vertebrata</taxon>
        <taxon>Euteleostomi</taxon>
        <taxon>Mammalia</taxon>
        <taxon>Eutheria</taxon>
        <taxon>Laurasiatheria</taxon>
        <taxon>Artiodactyla</taxon>
        <taxon>Ruminantia</taxon>
        <taxon>Pecora</taxon>
        <taxon>Bovidae</taxon>
        <taxon>Bovinae</taxon>
        <taxon>Bos</taxon>
    </lineage>
</organism>
<proteinExistence type="evidence at transcript level"/>